<proteinExistence type="inferred from homology"/>
<evidence type="ECO:0000256" key="1">
    <source>
        <dbReference type="SAM" id="MobiDB-lite"/>
    </source>
</evidence>
<evidence type="ECO:0000305" key="2"/>
<organism>
    <name type="scientific">Amycolatopsis methanolica</name>
    <dbReference type="NCBI Taxonomy" id="1814"/>
    <lineage>
        <taxon>Bacteria</taxon>
        <taxon>Bacillati</taxon>
        <taxon>Actinomycetota</taxon>
        <taxon>Actinomycetes</taxon>
        <taxon>Pseudonocardiales</taxon>
        <taxon>Pseudonocardiaceae</taxon>
        <taxon>Amycolatopsis</taxon>
        <taxon>Amycolatopsis methanolica group</taxon>
    </lineage>
</organism>
<name>AROG_AMYME</name>
<protein>
    <recommendedName>
        <fullName>Phospho-2-dehydro-3-deoxyheptonate aldolase</fullName>
        <ecNumber>2.5.1.54</ecNumber>
    </recommendedName>
    <alternativeName>
        <fullName>3-deoxy-D-arabino-heptulosonate 7-phosphate synthase</fullName>
    </alternativeName>
    <alternativeName>
        <fullName>DAHP synthase</fullName>
    </alternativeName>
    <alternativeName>
        <fullName>Phospho-2-keto-3-deoxyheptonate aldolase</fullName>
    </alternativeName>
</protein>
<reference key="1">
    <citation type="journal article" date="1996" name="J. Bacteriol.">
        <title>Characterization and phylogeny of the pfp gene of Amycolatopsis methanolica encoding PPi-dependent phosphofructokinase.</title>
        <authorList>
            <person name="Alves A.M."/>
            <person name="Meijer W.G."/>
            <person name="Vrijbloed J.W."/>
            <person name="Dijkhuizen L."/>
        </authorList>
    </citation>
    <scope>NUCLEOTIDE SEQUENCE [GENOMIC DNA]</scope>
</reference>
<reference key="2">
    <citation type="submission" date="1995-07" db="EMBL/GenBank/DDBJ databases">
        <authorList>
            <person name="Rodrigues Alves A.M."/>
        </authorList>
    </citation>
    <scope>NUCLEOTIDE SEQUENCE [GENOMIC DNA]</scope>
</reference>
<feature type="chain" id="PRO_0000140828" description="Phospho-2-dehydro-3-deoxyheptonate aldolase">
    <location>
        <begin position="1"/>
        <end position="203" status="greater than"/>
    </location>
</feature>
<feature type="region of interest" description="Disordered" evidence="1">
    <location>
        <begin position="1"/>
        <end position="28"/>
    </location>
</feature>
<feature type="compositionally biased region" description="Basic and acidic residues" evidence="1">
    <location>
        <begin position="1"/>
        <end position="10"/>
    </location>
</feature>
<feature type="non-terminal residue">
    <location>
        <position position="203"/>
    </location>
</feature>
<accession>Q44093</accession>
<comment type="function">
    <text>Stereospecific condensation of phosphoenolpyruvate (PEP) and D-erythrose-4-phosphate (E4P) giving rise to 3-deoxy-D-arabino-heptulosonate-7-phosphate (DAHP).</text>
</comment>
<comment type="catalytic activity">
    <reaction>
        <text>D-erythrose 4-phosphate + phosphoenolpyruvate + H2O = 7-phospho-2-dehydro-3-deoxy-D-arabino-heptonate + phosphate</text>
        <dbReference type="Rhea" id="RHEA:14717"/>
        <dbReference type="ChEBI" id="CHEBI:15377"/>
        <dbReference type="ChEBI" id="CHEBI:16897"/>
        <dbReference type="ChEBI" id="CHEBI:43474"/>
        <dbReference type="ChEBI" id="CHEBI:58394"/>
        <dbReference type="ChEBI" id="CHEBI:58702"/>
        <dbReference type="EC" id="2.5.1.54"/>
    </reaction>
</comment>
<comment type="pathway">
    <text>Metabolic intermediate biosynthesis; chorismate biosynthesis; chorismate from D-erythrose 4-phosphate and phosphoenolpyruvate: step 1/7.</text>
</comment>
<comment type="similarity">
    <text evidence="2">Belongs to the class-I DAHP synthase family.</text>
</comment>
<dbReference type="EC" id="2.5.1.54"/>
<dbReference type="EMBL" id="U31277">
    <property type="protein sequence ID" value="AAB01682.1"/>
    <property type="molecule type" value="Genomic_DNA"/>
</dbReference>
<dbReference type="SMR" id="Q44093"/>
<dbReference type="UniPathway" id="UPA00053">
    <property type="reaction ID" value="UER00084"/>
</dbReference>
<dbReference type="GO" id="GO:0005737">
    <property type="term" value="C:cytoplasm"/>
    <property type="evidence" value="ECO:0007669"/>
    <property type="project" value="TreeGrafter"/>
</dbReference>
<dbReference type="GO" id="GO:0003849">
    <property type="term" value="F:3-deoxy-7-phosphoheptulonate synthase activity"/>
    <property type="evidence" value="ECO:0007669"/>
    <property type="project" value="UniProtKB-EC"/>
</dbReference>
<dbReference type="GO" id="GO:0008652">
    <property type="term" value="P:amino acid biosynthetic process"/>
    <property type="evidence" value="ECO:0007669"/>
    <property type="project" value="UniProtKB-KW"/>
</dbReference>
<dbReference type="GO" id="GO:0009073">
    <property type="term" value="P:aromatic amino acid family biosynthetic process"/>
    <property type="evidence" value="ECO:0007669"/>
    <property type="project" value="UniProtKB-KW"/>
</dbReference>
<dbReference type="GO" id="GO:0009423">
    <property type="term" value="P:chorismate biosynthetic process"/>
    <property type="evidence" value="ECO:0007669"/>
    <property type="project" value="UniProtKB-UniPathway"/>
</dbReference>
<dbReference type="Gene3D" id="3.20.20.70">
    <property type="entry name" value="Aldolase class I"/>
    <property type="match status" value="1"/>
</dbReference>
<dbReference type="InterPro" id="IPR013785">
    <property type="entry name" value="Aldolase_TIM"/>
</dbReference>
<dbReference type="InterPro" id="IPR006218">
    <property type="entry name" value="DAHP1/KDSA"/>
</dbReference>
<dbReference type="InterPro" id="IPR006219">
    <property type="entry name" value="DAHP_synth_1"/>
</dbReference>
<dbReference type="NCBIfam" id="TIGR00034">
    <property type="entry name" value="aroFGH"/>
    <property type="match status" value="1"/>
</dbReference>
<dbReference type="PANTHER" id="PTHR21225">
    <property type="entry name" value="PHOSPHO-2-DEHYDRO-3-DEOXYHEPTONATE ALDOLASE DAHP SYNTHETASE"/>
    <property type="match status" value="1"/>
</dbReference>
<dbReference type="PANTHER" id="PTHR21225:SF12">
    <property type="entry name" value="PHOSPHO-2-DEHYDRO-3-DEOXYHEPTONATE ALDOLASE, TYROSINE-INHIBITED"/>
    <property type="match status" value="1"/>
</dbReference>
<dbReference type="Pfam" id="PF00793">
    <property type="entry name" value="DAHP_synth_1"/>
    <property type="match status" value="1"/>
</dbReference>
<dbReference type="SUPFAM" id="SSF51569">
    <property type="entry name" value="Aldolase"/>
    <property type="match status" value="1"/>
</dbReference>
<gene>
    <name type="primary">aroA</name>
</gene>
<keyword id="KW-0028">Amino-acid biosynthesis</keyword>
<keyword id="KW-0057">Aromatic amino acid biosynthesis</keyword>
<keyword id="KW-0808">Transferase</keyword>
<sequence length="203" mass="21886">MIDRLVRDSRGPVTERNPPHMSLSAGPAEISEGLDNQRTLGVSPLISPALLRQELPVDAAIAKTVAHGRSSAVDILHGDDDRLIVVVGPCSVHDPAAALDYAHRLAEHAAGVRDELHVIMRVYFEKPRTTLGWKGLINDPDLDGSYAVNKGLRMARKLLLDISALGLPVGCEFLDPITPQFIADTVSWGSIGARTAASQVHRQ</sequence>